<sequence>MDTKTTEIKGKERYKAGVLKYAQMGYWDGDYVPKDTDVLALFRITPQEGVDPVEAAAAVAGESSTATWTVVWTDRLTACDSYRAKAYRVEPVPGTPGQYFCYVAYDLILFEEGSIANLTASIIGNVFSFKPLKAARLEDMRFPVAYVKTYKGPPTGIVGERERLDKFGKPLLGATTKPKLGLSGKNYGRVVYEGLKGGLDFMKDDENINSQPFMHWRDRFLYVMEAVNLASAQTGEVKGHYLNITAGTMEEMYRRAEFAKSLGSVIVMVDLIIGYTAIQSISEWCRQNDMILHMHRAGHGTYTRQKNHGISFRVIAKWLRLAGVDHLHCGTAVGKLEGDPLTVQGYYNVCREPFNTVDLPRGIFFEQDWADLRKVMPVASGGIHAGQMHQLLSLFGDDVVLQFGGGTIGHPMGIQAGATANRVALEAMVLARNEGRNIDVEGPEILRAAAKWCKPLEAALDTWGNITFNYTSTDTSDFVPTASVAM</sequence>
<reference key="1">
    <citation type="journal article" date="1991" name="J. Biol. Chem.">
        <title>Nucleotide sequence, transcriptional analysis, and expression of genes encoded within the form I CO2 fixation operon of Rhodobacter sphaeroides.</title>
        <authorList>
            <person name="Gibson J.L."/>
            <person name="Falcone D.L."/>
            <person name="Tabita F.R."/>
        </authorList>
    </citation>
    <scope>NUCLEOTIDE SEQUENCE [GENOMIC DNA]</scope>
    <scope>INDUCTION</scope>
    <source>
        <strain>HR</strain>
    </source>
</reference>
<reference key="2">
    <citation type="journal article" date="1999" name="Arch. Biochem. Biophys.">
        <title>Closely related form I ribulose bisphosphate carboxylase/oxygenase molecules that possess different CO2/O2 substrate specificities.</title>
        <authorList>
            <person name="Horken K.M."/>
            <person name="Tabita F.R."/>
        </authorList>
    </citation>
    <scope>FUNCTION</scope>
    <scope>CATALYTIC ACTIVITY</scope>
    <scope>BIOPHYSICOCHEMICAL PROPERTIES</scope>
    <scope>MUTAGENESIS OF LEU-341</scope>
    <source>
        <strain>FI</strain>
    </source>
</reference>
<gene>
    <name evidence="1" type="primary">cbbL</name>
    <name type="synonym">cbbL1</name>
    <name evidence="1" type="synonym">rbcL</name>
</gene>
<proteinExistence type="evidence at protein level"/>
<dbReference type="EC" id="4.1.1.39" evidence="1 3"/>
<dbReference type="EMBL" id="M64624">
    <property type="protein sequence ID" value="AAA26115.1"/>
    <property type="molecule type" value="Genomic_DNA"/>
</dbReference>
<dbReference type="PIR" id="D40767">
    <property type="entry name" value="RKRFAL"/>
</dbReference>
<dbReference type="RefSeq" id="WP_002721829.1">
    <property type="nucleotide sequence ID" value="NZ_WTFI01000004.1"/>
</dbReference>
<dbReference type="PDB" id="5NV3">
    <property type="method" value="EM"/>
    <property type="resolution" value="3.39 A"/>
    <property type="chains" value="A/B/C/D/E/F/G/H=13-479"/>
</dbReference>
<dbReference type="PDBsum" id="5NV3"/>
<dbReference type="EMDB" id="EMD-3699"/>
<dbReference type="EMDB" id="EMD-3700"/>
<dbReference type="EMDB" id="EMD-3701"/>
<dbReference type="EMDB" id="EMD-3702"/>
<dbReference type="SMR" id="P27997"/>
<dbReference type="OMA" id="IHGHPDG"/>
<dbReference type="SABIO-RK" id="P27997"/>
<dbReference type="GO" id="GO:0000287">
    <property type="term" value="F:magnesium ion binding"/>
    <property type="evidence" value="ECO:0007669"/>
    <property type="project" value="UniProtKB-UniRule"/>
</dbReference>
<dbReference type="GO" id="GO:0004497">
    <property type="term" value="F:monooxygenase activity"/>
    <property type="evidence" value="ECO:0007669"/>
    <property type="project" value="UniProtKB-KW"/>
</dbReference>
<dbReference type="GO" id="GO:0016984">
    <property type="term" value="F:ribulose-bisphosphate carboxylase activity"/>
    <property type="evidence" value="ECO:0007669"/>
    <property type="project" value="UniProtKB-UniRule"/>
</dbReference>
<dbReference type="GO" id="GO:0019253">
    <property type="term" value="P:reductive pentose-phosphate cycle"/>
    <property type="evidence" value="ECO:0007669"/>
    <property type="project" value="UniProtKB-UniRule"/>
</dbReference>
<dbReference type="CDD" id="cd08212">
    <property type="entry name" value="RuBisCO_large_I"/>
    <property type="match status" value="1"/>
</dbReference>
<dbReference type="Gene3D" id="3.20.20.110">
    <property type="entry name" value="Ribulose bisphosphate carboxylase, large subunit, C-terminal domain"/>
    <property type="match status" value="1"/>
</dbReference>
<dbReference type="Gene3D" id="3.30.70.150">
    <property type="entry name" value="RuBisCO large subunit, N-terminal domain"/>
    <property type="match status" value="1"/>
</dbReference>
<dbReference type="HAMAP" id="MF_01338">
    <property type="entry name" value="RuBisCO_L_type1"/>
    <property type="match status" value="1"/>
</dbReference>
<dbReference type="InterPro" id="IPR033966">
    <property type="entry name" value="RuBisCO"/>
</dbReference>
<dbReference type="InterPro" id="IPR020878">
    <property type="entry name" value="RuBisCo_large_chain_AS"/>
</dbReference>
<dbReference type="InterPro" id="IPR000685">
    <property type="entry name" value="RuBisCO_lsu_C"/>
</dbReference>
<dbReference type="InterPro" id="IPR036376">
    <property type="entry name" value="RuBisCO_lsu_C_sf"/>
</dbReference>
<dbReference type="InterPro" id="IPR017443">
    <property type="entry name" value="RuBisCO_lsu_fd_N"/>
</dbReference>
<dbReference type="InterPro" id="IPR036422">
    <property type="entry name" value="RuBisCO_lsu_N_sf"/>
</dbReference>
<dbReference type="InterPro" id="IPR020888">
    <property type="entry name" value="RuBisCO_lsuI"/>
</dbReference>
<dbReference type="NCBIfam" id="NF003252">
    <property type="entry name" value="PRK04208.1"/>
    <property type="match status" value="1"/>
</dbReference>
<dbReference type="PANTHER" id="PTHR42704">
    <property type="entry name" value="RIBULOSE BISPHOSPHATE CARBOXYLASE"/>
    <property type="match status" value="1"/>
</dbReference>
<dbReference type="PANTHER" id="PTHR42704:SF17">
    <property type="entry name" value="RIBULOSE BISPHOSPHATE CARBOXYLASE LARGE CHAIN"/>
    <property type="match status" value="1"/>
</dbReference>
<dbReference type="Pfam" id="PF00016">
    <property type="entry name" value="RuBisCO_large"/>
    <property type="match status" value="1"/>
</dbReference>
<dbReference type="Pfam" id="PF02788">
    <property type="entry name" value="RuBisCO_large_N"/>
    <property type="match status" value="1"/>
</dbReference>
<dbReference type="SFLD" id="SFLDG01052">
    <property type="entry name" value="RuBisCO"/>
    <property type="match status" value="1"/>
</dbReference>
<dbReference type="SFLD" id="SFLDS00014">
    <property type="entry name" value="RuBisCO"/>
    <property type="match status" value="1"/>
</dbReference>
<dbReference type="SFLD" id="SFLDG00301">
    <property type="entry name" value="RuBisCO-like_proteins"/>
    <property type="match status" value="1"/>
</dbReference>
<dbReference type="SUPFAM" id="SSF51649">
    <property type="entry name" value="RuBisCo, C-terminal domain"/>
    <property type="match status" value="1"/>
</dbReference>
<dbReference type="SUPFAM" id="SSF54966">
    <property type="entry name" value="RuBisCO, large subunit, small (N-terminal) domain"/>
    <property type="match status" value="1"/>
</dbReference>
<dbReference type="PROSITE" id="PS00157">
    <property type="entry name" value="RUBISCO_LARGE"/>
    <property type="match status" value="1"/>
</dbReference>
<evidence type="ECO:0000255" key="1">
    <source>
        <dbReference type="HAMAP-Rule" id="MF_01338"/>
    </source>
</evidence>
<evidence type="ECO:0000269" key="2">
    <source>
    </source>
</evidence>
<evidence type="ECO:0000269" key="3">
    <source>
    </source>
</evidence>
<evidence type="ECO:0000305" key="4">
    <source>
    </source>
</evidence>
<evidence type="ECO:0007829" key="5">
    <source>
        <dbReference type="PDB" id="5NV3"/>
    </source>
</evidence>
<feature type="chain" id="PRO_0000062647" description="Ribulose bisphosphate carboxylase large chain">
    <location>
        <begin position="1"/>
        <end position="486"/>
    </location>
</feature>
<feature type="active site" description="Proton acceptor" evidence="1">
    <location>
        <position position="177"/>
    </location>
</feature>
<feature type="active site" description="Proton acceptor" evidence="1">
    <location>
        <position position="295"/>
    </location>
</feature>
<feature type="binding site" description="in homodimeric partner" evidence="1">
    <location>
        <position position="125"/>
    </location>
    <ligand>
        <name>substrate</name>
    </ligand>
</feature>
<feature type="binding site" evidence="1">
    <location>
        <position position="175"/>
    </location>
    <ligand>
        <name>substrate</name>
    </ligand>
</feature>
<feature type="binding site" evidence="1">
    <location>
        <position position="179"/>
    </location>
    <ligand>
        <name>substrate</name>
    </ligand>
</feature>
<feature type="binding site" description="via carbamate group" evidence="1">
    <location>
        <position position="203"/>
    </location>
    <ligand>
        <name>Mg(2+)</name>
        <dbReference type="ChEBI" id="CHEBI:18420"/>
    </ligand>
</feature>
<feature type="binding site" evidence="1">
    <location>
        <position position="205"/>
    </location>
    <ligand>
        <name>Mg(2+)</name>
        <dbReference type="ChEBI" id="CHEBI:18420"/>
    </ligand>
</feature>
<feature type="binding site" evidence="1">
    <location>
        <position position="206"/>
    </location>
    <ligand>
        <name>Mg(2+)</name>
        <dbReference type="ChEBI" id="CHEBI:18420"/>
    </ligand>
</feature>
<feature type="binding site" evidence="1">
    <location>
        <position position="296"/>
    </location>
    <ligand>
        <name>substrate</name>
    </ligand>
</feature>
<feature type="binding site" evidence="1">
    <location>
        <position position="328"/>
    </location>
    <ligand>
        <name>substrate</name>
    </ligand>
</feature>
<feature type="binding site" evidence="1">
    <location>
        <position position="380"/>
    </location>
    <ligand>
        <name>substrate</name>
    </ligand>
</feature>
<feature type="site" description="Transition state stabilizer" evidence="1">
    <location>
        <position position="335"/>
    </location>
</feature>
<feature type="modified residue" description="N6-carboxylysine" evidence="1">
    <location>
        <position position="203"/>
    </location>
</feature>
<feature type="mutagenesis site" description="Increases KM for CO(2), decreases KM for ribulose 1,5-bisphosphate." evidence="3">
    <original>L</original>
    <variation>M</variation>
    <location>
        <position position="341"/>
    </location>
</feature>
<feature type="strand" evidence="5">
    <location>
        <begin position="15"/>
        <end position="17"/>
    </location>
</feature>
<feature type="helix" evidence="5">
    <location>
        <begin position="21"/>
        <end position="24"/>
    </location>
</feature>
<feature type="strand" evidence="5">
    <location>
        <begin position="35"/>
        <end position="46"/>
    </location>
</feature>
<feature type="helix" evidence="5">
    <location>
        <begin position="52"/>
        <end position="62"/>
    </location>
</feature>
<feature type="helix" evidence="5">
    <location>
        <begin position="72"/>
        <end position="75"/>
    </location>
</feature>
<feature type="turn" evidence="5">
    <location>
        <begin position="76"/>
        <end position="78"/>
    </location>
</feature>
<feature type="helix" evidence="5">
    <location>
        <begin position="79"/>
        <end position="82"/>
    </location>
</feature>
<feature type="strand" evidence="5">
    <location>
        <begin position="85"/>
        <end position="91"/>
    </location>
</feature>
<feature type="strand" evidence="5">
    <location>
        <begin position="99"/>
        <end position="106"/>
    </location>
</feature>
<feature type="helix" evidence="5">
    <location>
        <begin position="107"/>
        <end position="109"/>
    </location>
</feature>
<feature type="helix" evidence="5">
    <location>
        <begin position="115"/>
        <end position="122"/>
    </location>
</feature>
<feature type="strand" evidence="5">
    <location>
        <begin position="123"/>
        <end position="126"/>
    </location>
</feature>
<feature type="strand" evidence="5">
    <location>
        <begin position="132"/>
        <end position="141"/>
    </location>
</feature>
<feature type="helix" evidence="5">
    <location>
        <begin position="144"/>
        <end position="147"/>
    </location>
</feature>
<feature type="helix" evidence="5">
    <location>
        <begin position="156"/>
        <end position="164"/>
    </location>
</feature>
<feature type="strand" evidence="5">
    <location>
        <begin position="171"/>
        <end position="175"/>
    </location>
</feature>
<feature type="strand" evidence="5">
    <location>
        <begin position="177"/>
        <end position="180"/>
    </location>
</feature>
<feature type="helix" evidence="5">
    <location>
        <begin position="184"/>
        <end position="197"/>
    </location>
</feature>
<feature type="strand" evidence="5">
    <location>
        <begin position="200"/>
        <end position="203"/>
    </location>
</feature>
<feature type="strand" evidence="5">
    <location>
        <begin position="209"/>
        <end position="211"/>
    </location>
</feature>
<feature type="helix" evidence="5">
    <location>
        <begin position="216"/>
        <end position="234"/>
    </location>
</feature>
<feature type="strand" evidence="5">
    <location>
        <begin position="239"/>
        <end position="243"/>
    </location>
</feature>
<feature type="helix" evidence="5">
    <location>
        <begin position="249"/>
        <end position="262"/>
    </location>
</feature>
<feature type="strand" evidence="5">
    <location>
        <begin position="265"/>
        <end position="270"/>
    </location>
</feature>
<feature type="helix" evidence="5">
    <location>
        <begin position="271"/>
        <end position="273"/>
    </location>
</feature>
<feature type="helix" evidence="5">
    <location>
        <begin position="275"/>
        <end position="286"/>
    </location>
</feature>
<feature type="turn" evidence="5">
    <location>
        <begin position="287"/>
        <end position="289"/>
    </location>
</feature>
<feature type="strand" evidence="5">
    <location>
        <begin position="291"/>
        <end position="295"/>
    </location>
</feature>
<feature type="strand" evidence="5">
    <location>
        <begin position="302"/>
        <end position="304"/>
    </location>
</feature>
<feature type="strand" evidence="5">
    <location>
        <begin position="306"/>
        <end position="310"/>
    </location>
</feature>
<feature type="helix" evidence="5">
    <location>
        <begin position="312"/>
        <end position="322"/>
    </location>
</feature>
<feature type="strand" evidence="5">
    <location>
        <begin position="325"/>
        <end position="328"/>
    </location>
</feature>
<feature type="strand" evidence="5">
    <location>
        <begin position="332"/>
        <end position="336"/>
    </location>
</feature>
<feature type="helix" evidence="5">
    <location>
        <begin position="340"/>
        <end position="351"/>
    </location>
</feature>
<feature type="strand" evidence="5">
    <location>
        <begin position="353"/>
        <end position="355"/>
    </location>
</feature>
<feature type="turn" evidence="5">
    <location>
        <begin position="359"/>
        <end position="362"/>
    </location>
</feature>
<feature type="strand" evidence="5">
    <location>
        <begin position="376"/>
        <end position="382"/>
    </location>
</feature>
<feature type="helix" evidence="5">
    <location>
        <begin position="385"/>
        <end position="387"/>
    </location>
</feature>
<feature type="helix" evidence="5">
    <location>
        <begin position="388"/>
        <end position="394"/>
    </location>
</feature>
<feature type="strand" evidence="5">
    <location>
        <begin position="400"/>
        <end position="402"/>
    </location>
</feature>
<feature type="helix" evidence="5">
    <location>
        <begin position="405"/>
        <end position="408"/>
    </location>
</feature>
<feature type="helix" evidence="5">
    <location>
        <begin position="415"/>
        <end position="434"/>
    </location>
</feature>
<feature type="turn" evidence="5">
    <location>
        <begin position="438"/>
        <end position="440"/>
    </location>
</feature>
<feature type="helix" evidence="5">
    <location>
        <begin position="442"/>
        <end position="449"/>
    </location>
</feature>
<feature type="turn" evidence="5">
    <location>
        <begin position="450"/>
        <end position="452"/>
    </location>
</feature>
<feature type="helix" evidence="5">
    <location>
        <begin position="454"/>
        <end position="462"/>
    </location>
</feature>
<feature type="strand" evidence="5">
    <location>
        <begin position="463"/>
        <end position="465"/>
    </location>
</feature>
<accession>P27997</accession>
<protein>
    <recommendedName>
        <fullName evidence="1">Ribulose bisphosphate carboxylase large chain</fullName>
        <shortName evidence="1">RuBisCO large subunit</shortName>
        <ecNumber evidence="1 3">4.1.1.39</ecNumber>
    </recommendedName>
</protein>
<organism>
    <name type="scientific">Cereibacter sphaeroides</name>
    <name type="common">Rhodobacter sphaeroides</name>
    <dbReference type="NCBI Taxonomy" id="1063"/>
    <lineage>
        <taxon>Bacteria</taxon>
        <taxon>Pseudomonadati</taxon>
        <taxon>Pseudomonadota</taxon>
        <taxon>Alphaproteobacteria</taxon>
        <taxon>Rhodobacterales</taxon>
        <taxon>Paracoccaceae</taxon>
        <taxon>Cereibacter</taxon>
    </lineage>
</organism>
<keyword id="KW-0002">3D-structure</keyword>
<keyword id="KW-0113">Calvin cycle</keyword>
<keyword id="KW-0120">Carbon dioxide fixation</keyword>
<keyword id="KW-0456">Lyase</keyword>
<keyword id="KW-0460">Magnesium</keyword>
<keyword id="KW-0479">Metal-binding</keyword>
<keyword id="KW-0503">Monooxygenase</keyword>
<keyword id="KW-0560">Oxidoreductase</keyword>
<keyword id="KW-0602">Photosynthesis</keyword>
<comment type="function">
    <text evidence="1 3">RuBisCO catalyzes two reactions: the carboxylation of D-ribulose 1,5-bisphosphate, the primary event in carbon dioxide fixation, as well as the oxidative fragmentation of the pentose substrate. Both reactions occur simultaneously and in competition at the same active site.</text>
</comment>
<comment type="catalytic activity">
    <reaction evidence="1 3">
        <text>2 (2R)-3-phosphoglycerate + 2 H(+) = D-ribulose 1,5-bisphosphate + CO2 + H2O</text>
        <dbReference type="Rhea" id="RHEA:23124"/>
        <dbReference type="ChEBI" id="CHEBI:15377"/>
        <dbReference type="ChEBI" id="CHEBI:15378"/>
        <dbReference type="ChEBI" id="CHEBI:16526"/>
        <dbReference type="ChEBI" id="CHEBI:57870"/>
        <dbReference type="ChEBI" id="CHEBI:58272"/>
        <dbReference type="EC" id="4.1.1.39"/>
    </reaction>
</comment>
<comment type="catalytic activity">
    <reaction evidence="1 3">
        <text>D-ribulose 1,5-bisphosphate + O2 = 2-phosphoglycolate + (2R)-3-phosphoglycerate + 2 H(+)</text>
        <dbReference type="Rhea" id="RHEA:36631"/>
        <dbReference type="ChEBI" id="CHEBI:15378"/>
        <dbReference type="ChEBI" id="CHEBI:15379"/>
        <dbReference type="ChEBI" id="CHEBI:57870"/>
        <dbReference type="ChEBI" id="CHEBI:58033"/>
        <dbReference type="ChEBI" id="CHEBI:58272"/>
    </reaction>
</comment>
<comment type="cofactor">
    <cofactor evidence="1">
        <name>Mg(2+)</name>
        <dbReference type="ChEBI" id="CHEBI:18420"/>
    </cofactor>
    <text evidence="1">Binds 1 Mg(2+) ion per subunit.</text>
</comment>
<comment type="biophysicochemical properties">
    <kinetics>
        <KM evidence="3">50 uM for ribulose 1,5-bisphosphate</KM>
        <KM evidence="3">22 uM for CO(2)</KM>
        <Vmax evidence="3">2.5 umol/min/mg enzyme with CO(2) as substrate</Vmax>
        <text>The CO(2)/O(2) specificity factor (tau) is 56.</text>
    </kinetics>
</comment>
<comment type="subunit">
    <text evidence="1 4">Heterohexadecamer of 8 large chains and 8 small chains.</text>
</comment>
<comment type="induction">
    <text evidence="2">Expression of this operon predominates when carbon dioxide is limiting.</text>
</comment>
<comment type="miscellaneous">
    <text evidence="1">The basic functional RuBisCO is composed of a large chain homodimer in a 'head-to-tail' conformation. In form I RuBisCO this homodimer is arranged in a barrel-like tetramer with the small subunits forming a tetrameric 'cap' on each end of the 'barrel'.</text>
</comment>
<comment type="similarity">
    <text evidence="1">Belongs to the RuBisCO large chain family. Type I subfamily.</text>
</comment>
<name>RBL1_CERSP</name>